<keyword id="KW-0963">Cytoplasm</keyword>
<keyword id="KW-0269">Exonuclease</keyword>
<keyword id="KW-0378">Hydrolase</keyword>
<keyword id="KW-0540">Nuclease</keyword>
<keyword id="KW-1185">Reference proteome</keyword>
<keyword id="KW-0694">RNA-binding</keyword>
<dbReference type="EC" id="3.1.13.1" evidence="2"/>
<dbReference type="EMBL" id="CP001063">
    <property type="protein sequence ID" value="ACD09829.1"/>
    <property type="molecule type" value="Genomic_DNA"/>
</dbReference>
<dbReference type="RefSeq" id="WP_000484972.1">
    <property type="nucleotide sequence ID" value="NC_010658.1"/>
</dbReference>
<dbReference type="SMR" id="B2U0I4"/>
<dbReference type="STRING" id="344609.SbBS512_E1520"/>
<dbReference type="KEGG" id="sbc:SbBS512_E1520"/>
<dbReference type="HOGENOM" id="CLU_002333_7_3_6"/>
<dbReference type="Proteomes" id="UP000001030">
    <property type="component" value="Chromosome"/>
</dbReference>
<dbReference type="GO" id="GO:0005829">
    <property type="term" value="C:cytosol"/>
    <property type="evidence" value="ECO:0007669"/>
    <property type="project" value="TreeGrafter"/>
</dbReference>
<dbReference type="GO" id="GO:0008859">
    <property type="term" value="F:exoribonuclease II activity"/>
    <property type="evidence" value="ECO:0007669"/>
    <property type="project" value="UniProtKB-UniRule"/>
</dbReference>
<dbReference type="GO" id="GO:0003723">
    <property type="term" value="F:RNA binding"/>
    <property type="evidence" value="ECO:0007669"/>
    <property type="project" value="UniProtKB-KW"/>
</dbReference>
<dbReference type="GO" id="GO:0006402">
    <property type="term" value="P:mRNA catabolic process"/>
    <property type="evidence" value="ECO:0007669"/>
    <property type="project" value="UniProtKB-UniRule"/>
</dbReference>
<dbReference type="FunFam" id="2.40.50.140:FF:000079">
    <property type="entry name" value="Exoribonuclease 2"/>
    <property type="match status" value="1"/>
</dbReference>
<dbReference type="FunFam" id="2.40.50.140:FF:000081">
    <property type="entry name" value="Exoribonuclease 2"/>
    <property type="match status" value="1"/>
</dbReference>
<dbReference type="FunFam" id="2.40.50.640:FF:000001">
    <property type="entry name" value="Exoribonuclease 2"/>
    <property type="match status" value="1"/>
</dbReference>
<dbReference type="Gene3D" id="2.40.50.640">
    <property type="match status" value="1"/>
</dbReference>
<dbReference type="Gene3D" id="2.40.50.140">
    <property type="entry name" value="Nucleic acid-binding proteins"/>
    <property type="match status" value="2"/>
</dbReference>
<dbReference type="HAMAP" id="MF_01036">
    <property type="entry name" value="RNase_II"/>
    <property type="match status" value="1"/>
</dbReference>
<dbReference type="InterPro" id="IPR011129">
    <property type="entry name" value="CSD"/>
</dbReference>
<dbReference type="InterPro" id="IPR012340">
    <property type="entry name" value="NA-bd_OB-fold"/>
</dbReference>
<dbReference type="InterPro" id="IPR013223">
    <property type="entry name" value="RNase_B_OB_dom"/>
</dbReference>
<dbReference type="InterPro" id="IPR011804">
    <property type="entry name" value="RNase_II"/>
</dbReference>
<dbReference type="InterPro" id="IPR001900">
    <property type="entry name" value="RNase_II/R"/>
</dbReference>
<dbReference type="InterPro" id="IPR022966">
    <property type="entry name" value="RNase_II/R_CS"/>
</dbReference>
<dbReference type="InterPro" id="IPR004476">
    <property type="entry name" value="RNase_II/RNase_R"/>
</dbReference>
<dbReference type="InterPro" id="IPR050180">
    <property type="entry name" value="RNR_Ribonuclease"/>
</dbReference>
<dbReference type="InterPro" id="IPR003029">
    <property type="entry name" value="S1_domain"/>
</dbReference>
<dbReference type="NCBIfam" id="TIGR00358">
    <property type="entry name" value="3_prime_RNase"/>
    <property type="match status" value="1"/>
</dbReference>
<dbReference type="NCBIfam" id="NF003455">
    <property type="entry name" value="PRK05054.1"/>
    <property type="match status" value="1"/>
</dbReference>
<dbReference type="NCBIfam" id="TIGR02062">
    <property type="entry name" value="RNase_B"/>
    <property type="match status" value="1"/>
</dbReference>
<dbReference type="PANTHER" id="PTHR23355:SF37">
    <property type="entry name" value="EXORIBONUCLEASE 2"/>
    <property type="match status" value="1"/>
</dbReference>
<dbReference type="PANTHER" id="PTHR23355">
    <property type="entry name" value="RIBONUCLEASE"/>
    <property type="match status" value="1"/>
</dbReference>
<dbReference type="Pfam" id="PF08206">
    <property type="entry name" value="OB_RNB"/>
    <property type="match status" value="1"/>
</dbReference>
<dbReference type="Pfam" id="PF00773">
    <property type="entry name" value="RNB"/>
    <property type="match status" value="1"/>
</dbReference>
<dbReference type="Pfam" id="PF00575">
    <property type="entry name" value="S1"/>
    <property type="match status" value="1"/>
</dbReference>
<dbReference type="SMART" id="SM00357">
    <property type="entry name" value="CSP"/>
    <property type="match status" value="1"/>
</dbReference>
<dbReference type="SMART" id="SM00955">
    <property type="entry name" value="RNB"/>
    <property type="match status" value="1"/>
</dbReference>
<dbReference type="SUPFAM" id="SSF50249">
    <property type="entry name" value="Nucleic acid-binding proteins"/>
    <property type="match status" value="4"/>
</dbReference>
<dbReference type="PROSITE" id="PS01175">
    <property type="entry name" value="RIBONUCLEASE_II"/>
    <property type="match status" value="1"/>
</dbReference>
<gene>
    <name evidence="2" type="primary">rnb</name>
    <name type="ordered locus">SbBS512_E1520</name>
</gene>
<protein>
    <recommendedName>
        <fullName evidence="2">Exoribonuclease 2</fullName>
        <ecNumber evidence="2">3.1.13.1</ecNumber>
    </recommendedName>
    <alternativeName>
        <fullName evidence="2">Exoribonuclease II</fullName>
        <shortName evidence="2">RNase II</shortName>
        <shortName evidence="2">Ribonuclease II</shortName>
    </alternativeName>
</protein>
<organism>
    <name type="scientific">Shigella boydii serotype 18 (strain CDC 3083-94 / BS512)</name>
    <dbReference type="NCBI Taxonomy" id="344609"/>
    <lineage>
        <taxon>Bacteria</taxon>
        <taxon>Pseudomonadati</taxon>
        <taxon>Pseudomonadota</taxon>
        <taxon>Gammaproteobacteria</taxon>
        <taxon>Enterobacterales</taxon>
        <taxon>Enterobacteriaceae</taxon>
        <taxon>Shigella</taxon>
    </lineage>
</organism>
<comment type="function">
    <text evidence="2">Involved in mRNA degradation. Hydrolyzes single-stranded polyribonucleotides processively in the 3' to 5' direction.</text>
</comment>
<comment type="catalytic activity">
    <reaction evidence="2">
        <text>Exonucleolytic cleavage in the 3'- to 5'-direction to yield nucleoside 5'-phosphates.</text>
        <dbReference type="EC" id="3.1.13.1"/>
    </reaction>
</comment>
<comment type="subcellular location">
    <subcellularLocation>
        <location evidence="2">Cytoplasm</location>
    </subcellularLocation>
</comment>
<comment type="similarity">
    <text evidence="2">Belongs to the RNR ribonuclease family. RNase II subfamily.</text>
</comment>
<accession>B2U0I4</accession>
<proteinExistence type="inferred from homology"/>
<name>RNB_SHIB3</name>
<sequence length="644" mass="72493">MFQDNPLLAQLKQQLHSQTPRAEGVVKATEKGFGFLEVDAQKSYFIPPPQMKKVMHGDRIIAVIHSEKERESAEPEELVEPFLTRFVGKVQGKNDRLAIVPDHPLLKDAIPCRAARGLNHEFKEGDWAVAEMRRHPLKGDRSFYAELTQYITFGDDHFVPWWVTLARHNLEKEAPDGVATEMLDEGLVREDLTALDFVTIDSASTEDMDDALFAKALPDDKLQLIVAIADPTAWIAEGSKLDKAAKIRAFTNYLPGFNIPMLPRELSDDLCSLRANEVRPVLACRMTLSADGAIEDNIEFFAATIESKAKLVYDQVSDWLENTGDWQPESEAIAEQVRLLAQICQRRGEWRHNHALVFKDRPDYRFILGEKGEVLDIVAEPRRIANRIVEEAMIAANICAARVLRDKLGFGIYNVHMGFDPANADALAALLKTHGLHVDAEEVLTLDGFCKLRRELDAQPTGFLDSRIRRFQSFAEISTEPGPHFGLGLEAYATWTSPIRKYGDMINHRLLKAVIKGETATRPQDEITVQMAERRRLNRMAERDVGDWLYARFLKDKAGTDTRFAAEIVDISRGGMRVRLVDNGAIAFIPAPFLHAMRDELVCSQENGTVQIKGETVYKVTDVIDVTIAEVRMETRSIIARPVA</sequence>
<feature type="chain" id="PRO_1000135881" description="Exoribonuclease 2">
    <location>
        <begin position="1"/>
        <end position="644"/>
    </location>
</feature>
<feature type="domain" description="RNB" evidence="1">
    <location>
        <begin position="189"/>
        <end position="516"/>
    </location>
</feature>
<feature type="domain" description="S1 motif" evidence="2">
    <location>
        <begin position="561"/>
        <end position="643"/>
    </location>
</feature>
<reference key="1">
    <citation type="submission" date="2008-05" db="EMBL/GenBank/DDBJ databases">
        <title>Complete sequence of Shigella boydii serotype 18 strain BS512.</title>
        <authorList>
            <person name="Rasko D.A."/>
            <person name="Rosovitz M."/>
            <person name="Maurelli A.T."/>
            <person name="Myers G."/>
            <person name="Seshadri R."/>
            <person name="Cer R."/>
            <person name="Jiang L."/>
            <person name="Ravel J."/>
            <person name="Sebastian Y."/>
        </authorList>
    </citation>
    <scope>NUCLEOTIDE SEQUENCE [LARGE SCALE GENOMIC DNA]</scope>
    <source>
        <strain>CDC 3083-94 / BS512</strain>
    </source>
</reference>
<evidence type="ECO:0000255" key="1"/>
<evidence type="ECO:0000255" key="2">
    <source>
        <dbReference type="HAMAP-Rule" id="MF_01036"/>
    </source>
</evidence>